<reference key="1">
    <citation type="journal article" date="2004" name="Proc. Natl. Acad. Sci. U.S.A.">
        <title>Large-scale cDNA transfection screening for genes related to cancer development and progression.</title>
        <authorList>
            <person name="Wan D."/>
            <person name="Gong Y."/>
            <person name="Qin W."/>
            <person name="Zhang P."/>
            <person name="Li J."/>
            <person name="Wei L."/>
            <person name="Zhou X."/>
            <person name="Li H."/>
            <person name="Qiu X."/>
            <person name="Zhong F."/>
            <person name="He L."/>
            <person name="Yu J."/>
            <person name="Yao G."/>
            <person name="Jiang H."/>
            <person name="Qian L."/>
            <person name="Yu Y."/>
            <person name="Shu H."/>
            <person name="Chen X."/>
            <person name="Xu H."/>
            <person name="Guo M."/>
            <person name="Pan Z."/>
            <person name="Chen Y."/>
            <person name="Ge C."/>
            <person name="Yang S."/>
            <person name="Gu J."/>
        </authorList>
    </citation>
    <scope>NUCLEOTIDE SEQUENCE [LARGE SCALE MRNA] (ISOFORM 1)</scope>
</reference>
<reference key="2">
    <citation type="journal article" date="2004" name="Nat. Genet.">
        <title>Complete sequencing and characterization of 21,243 full-length human cDNAs.</title>
        <authorList>
            <person name="Ota T."/>
            <person name="Suzuki Y."/>
            <person name="Nishikawa T."/>
            <person name="Otsuki T."/>
            <person name="Sugiyama T."/>
            <person name="Irie R."/>
            <person name="Wakamatsu A."/>
            <person name="Hayashi K."/>
            <person name="Sato H."/>
            <person name="Nagai K."/>
            <person name="Kimura K."/>
            <person name="Makita H."/>
            <person name="Sekine M."/>
            <person name="Obayashi M."/>
            <person name="Nishi T."/>
            <person name="Shibahara T."/>
            <person name="Tanaka T."/>
            <person name="Ishii S."/>
            <person name="Yamamoto J."/>
            <person name="Saito K."/>
            <person name="Kawai Y."/>
            <person name="Isono Y."/>
            <person name="Nakamura Y."/>
            <person name="Nagahari K."/>
            <person name="Murakami K."/>
            <person name="Yasuda T."/>
            <person name="Iwayanagi T."/>
            <person name="Wagatsuma M."/>
            <person name="Shiratori A."/>
            <person name="Sudo H."/>
            <person name="Hosoiri T."/>
            <person name="Kaku Y."/>
            <person name="Kodaira H."/>
            <person name="Kondo H."/>
            <person name="Sugawara M."/>
            <person name="Takahashi M."/>
            <person name="Kanda K."/>
            <person name="Yokoi T."/>
            <person name="Furuya T."/>
            <person name="Kikkawa E."/>
            <person name="Omura Y."/>
            <person name="Abe K."/>
            <person name="Kamihara K."/>
            <person name="Katsuta N."/>
            <person name="Sato K."/>
            <person name="Tanikawa M."/>
            <person name="Yamazaki M."/>
            <person name="Ninomiya K."/>
            <person name="Ishibashi T."/>
            <person name="Yamashita H."/>
            <person name="Murakawa K."/>
            <person name="Fujimori K."/>
            <person name="Tanai H."/>
            <person name="Kimata M."/>
            <person name="Watanabe M."/>
            <person name="Hiraoka S."/>
            <person name="Chiba Y."/>
            <person name="Ishida S."/>
            <person name="Ono Y."/>
            <person name="Takiguchi S."/>
            <person name="Watanabe S."/>
            <person name="Yosida M."/>
            <person name="Hotuta T."/>
            <person name="Kusano J."/>
            <person name="Kanehori K."/>
            <person name="Takahashi-Fujii A."/>
            <person name="Hara H."/>
            <person name="Tanase T.-O."/>
            <person name="Nomura Y."/>
            <person name="Togiya S."/>
            <person name="Komai F."/>
            <person name="Hara R."/>
            <person name="Takeuchi K."/>
            <person name="Arita M."/>
            <person name="Imose N."/>
            <person name="Musashino K."/>
            <person name="Yuuki H."/>
            <person name="Oshima A."/>
            <person name="Sasaki N."/>
            <person name="Aotsuka S."/>
            <person name="Yoshikawa Y."/>
            <person name="Matsunawa H."/>
            <person name="Ichihara T."/>
            <person name="Shiohata N."/>
            <person name="Sano S."/>
            <person name="Moriya S."/>
            <person name="Momiyama H."/>
            <person name="Satoh N."/>
            <person name="Takami S."/>
            <person name="Terashima Y."/>
            <person name="Suzuki O."/>
            <person name="Nakagawa S."/>
            <person name="Senoh A."/>
            <person name="Mizoguchi H."/>
            <person name="Goto Y."/>
            <person name="Shimizu F."/>
            <person name="Wakebe H."/>
            <person name="Hishigaki H."/>
            <person name="Watanabe T."/>
            <person name="Sugiyama A."/>
            <person name="Takemoto M."/>
            <person name="Kawakami B."/>
            <person name="Yamazaki M."/>
            <person name="Watanabe K."/>
            <person name="Kumagai A."/>
            <person name="Itakura S."/>
            <person name="Fukuzumi Y."/>
            <person name="Fujimori Y."/>
            <person name="Komiyama M."/>
            <person name="Tashiro H."/>
            <person name="Tanigami A."/>
            <person name="Fujiwara T."/>
            <person name="Ono T."/>
            <person name="Yamada K."/>
            <person name="Fujii Y."/>
            <person name="Ozaki K."/>
            <person name="Hirao M."/>
            <person name="Ohmori Y."/>
            <person name="Kawabata A."/>
            <person name="Hikiji T."/>
            <person name="Kobatake N."/>
            <person name="Inagaki H."/>
            <person name="Ikema Y."/>
            <person name="Okamoto S."/>
            <person name="Okitani R."/>
            <person name="Kawakami T."/>
            <person name="Noguchi S."/>
            <person name="Itoh T."/>
            <person name="Shigeta K."/>
            <person name="Senba T."/>
            <person name="Matsumura K."/>
            <person name="Nakajima Y."/>
            <person name="Mizuno T."/>
            <person name="Morinaga M."/>
            <person name="Sasaki M."/>
            <person name="Togashi T."/>
            <person name="Oyama M."/>
            <person name="Hata H."/>
            <person name="Watanabe M."/>
            <person name="Komatsu T."/>
            <person name="Mizushima-Sugano J."/>
            <person name="Satoh T."/>
            <person name="Shirai Y."/>
            <person name="Takahashi Y."/>
            <person name="Nakagawa K."/>
            <person name="Okumura K."/>
            <person name="Nagase T."/>
            <person name="Nomura N."/>
            <person name="Kikuchi H."/>
            <person name="Masuho Y."/>
            <person name="Yamashita R."/>
            <person name="Nakai K."/>
            <person name="Yada T."/>
            <person name="Nakamura Y."/>
            <person name="Ohara O."/>
            <person name="Isogai T."/>
            <person name="Sugano S."/>
        </authorList>
    </citation>
    <scope>NUCLEOTIDE SEQUENCE [LARGE SCALE MRNA] (ISOFORMS 1 AND 2)</scope>
    <source>
        <tissue>Mammary gland</tissue>
        <tissue>Testis</tissue>
    </source>
</reference>
<reference key="3">
    <citation type="journal article" date="2004" name="Genome Res.">
        <title>The status, quality, and expansion of the NIH full-length cDNA project: the Mammalian Gene Collection (MGC).</title>
        <authorList>
            <consortium name="The MGC Project Team"/>
        </authorList>
    </citation>
    <scope>NUCLEOTIDE SEQUENCE [LARGE SCALE MRNA] (ISOFORMS 1 AND 2)</scope>
    <source>
        <tissue>Lung</tissue>
    </source>
</reference>
<reference key="4">
    <citation type="journal article" date="1999" name="RNA">
        <title>Cloning and characterization of a mammalian pseudouridine synthase.</title>
        <authorList>
            <person name="Chen J."/>
            <person name="Patton J.R."/>
        </authorList>
    </citation>
    <scope>NUCLEOTIDE SEQUENCE [MRNA] OF 63-427</scope>
    <source>
        <tissue>Cervix carcinoma</tissue>
    </source>
</reference>
<reference key="5">
    <citation type="journal article" date="2004" name="Am. J. Hum. Genet.">
        <title>Missense mutation in pseudouridine synthase 1 (PUS1) causes mitochondrial myopathy and sideroblastic anemia (MLASA).</title>
        <authorList>
            <person name="Bykhovskaya Y."/>
            <person name="Casas K."/>
            <person name="Mengesha E."/>
            <person name="Inbal A."/>
            <person name="Fischel-Ghodsian N."/>
        </authorList>
    </citation>
    <scope>VARIANT MLASA1 TRP-144</scope>
    <scope>TISSUE SPECIFICITY</scope>
</reference>
<reference key="6">
    <citation type="journal article" date="2005" name="J. Biol. Chem.">
        <title>Mitochondrial myopathy and sideroblastic anemia (MLASA): missense mutation in the pseudouridine synthase 1 (PUS1) gene is associated with the loss of tRNA pseudouridylation.</title>
        <authorList>
            <person name="Patton J.R."/>
            <person name="Bykhovskaya Y."/>
            <person name="Mengesha E."/>
            <person name="Bertolotto C."/>
            <person name="Fischel-Ghodsian N."/>
        </authorList>
    </citation>
    <scope>INVOLVEMENT IN MLASA1</scope>
    <scope>FUNCTION</scope>
    <scope>SUBCELLULAR LOCATION</scope>
</reference>
<reference key="7">
    <citation type="journal article" date="2005" name="J. Child Neurol.">
        <title>Mitochondrial myopathy, sideroblastic anemia, and lactic acidosis: an autosomal recessive syndrome in Persian Jews caused by a mutation in the PUS1 gene.</title>
        <authorList>
            <person name="Zeharia A."/>
            <person name="Fischel-Ghodsian N."/>
            <person name="Casas K."/>
            <person name="Bykhocskaya Y."/>
            <person name="Tamari H."/>
            <person name="Lev D."/>
            <person name="Mimouni M."/>
            <person name="Lerman-Sagie T."/>
        </authorList>
    </citation>
    <scope>INVOLVEMENT IN MLASA1</scope>
</reference>
<reference key="8">
    <citation type="journal article" date="2006" name="Cell">
        <title>Global, in vivo, and site-specific phosphorylation dynamics in signaling networks.</title>
        <authorList>
            <person name="Olsen J.V."/>
            <person name="Blagoev B."/>
            <person name="Gnad F."/>
            <person name="Macek B."/>
            <person name="Kumar C."/>
            <person name="Mortensen P."/>
            <person name="Mann M."/>
        </authorList>
    </citation>
    <scope>PHOSPHORYLATION [LARGE SCALE ANALYSIS] AT SER-420 AND THR-426</scope>
    <scope>IDENTIFICATION BY MASS SPECTROMETRY [LARGE SCALE ANALYSIS]</scope>
    <source>
        <tissue>Cervix carcinoma</tissue>
    </source>
</reference>
<reference key="9">
    <citation type="journal article" date="2006" name="Science">
        <title>The consensus coding sequences of human breast and colorectal cancers.</title>
        <authorList>
            <person name="Sjoeblom T."/>
            <person name="Jones S."/>
            <person name="Wood L.D."/>
            <person name="Parsons D.W."/>
            <person name="Lin J."/>
            <person name="Barber T.D."/>
            <person name="Mandelker D."/>
            <person name="Leary R.J."/>
            <person name="Ptak J."/>
            <person name="Silliman N."/>
            <person name="Szabo S."/>
            <person name="Buckhaults P."/>
            <person name="Farrell C."/>
            <person name="Meeh P."/>
            <person name="Markowitz S.D."/>
            <person name="Willis J."/>
            <person name="Dawson D."/>
            <person name="Willson J.K.V."/>
            <person name="Gazdar A.F."/>
            <person name="Hartigan J."/>
            <person name="Wu L."/>
            <person name="Liu C."/>
            <person name="Parmigiani G."/>
            <person name="Park B.H."/>
            <person name="Bachman K.E."/>
            <person name="Papadopoulos N."/>
            <person name="Vogelstein B."/>
            <person name="Kinzler K.W."/>
            <person name="Velculescu V.E."/>
        </authorList>
    </citation>
    <scope>VARIANT [LARGE SCALE ANALYSIS] ASN-133</scope>
</reference>
<reference key="10">
    <citation type="journal article" date="2007" name="J. Med. Genet.">
        <title>Nonsense mutation in pseudouridylate synthase 1 (PUS1) in two brothers affected by myopathy, lactic acidosis and sideroblastic anaemia (MLASA).</title>
        <authorList>
            <person name="Fernandez-Vizarra E."/>
            <person name="Berardinelli A."/>
            <person name="Valente L."/>
            <person name="Tiranti V."/>
            <person name="Zeviani M."/>
        </authorList>
    </citation>
    <scope>VARIANT MLASA1 220-GLU--ASP-427 DEL</scope>
    <scope>SUBCELLULAR LOCATION (ISOFORMS 1 AND 2)</scope>
</reference>
<reference key="11">
    <citation type="journal article" date="2008" name="Proc. Natl. Acad. Sci. U.S.A.">
        <title>A quantitative atlas of mitotic phosphorylation.</title>
        <authorList>
            <person name="Dephoure N."/>
            <person name="Zhou C."/>
            <person name="Villen J."/>
            <person name="Beausoleil S.A."/>
            <person name="Bakalarski C.E."/>
            <person name="Elledge S.J."/>
            <person name="Gygi S.P."/>
        </authorList>
    </citation>
    <scope>PHOSPHORYLATION [LARGE SCALE ANALYSIS] AT SER-420 AND THR-426</scope>
    <scope>IDENTIFICATION BY MASS SPECTROMETRY [LARGE SCALE ANALYSIS]</scope>
    <source>
        <tissue>Cervix carcinoma</tissue>
    </source>
</reference>
<reference key="12">
    <citation type="journal article" date="2009" name="Anal. Chem.">
        <title>Lys-N and trypsin cover complementary parts of the phosphoproteome in a refined SCX-based approach.</title>
        <authorList>
            <person name="Gauci S."/>
            <person name="Helbig A.O."/>
            <person name="Slijper M."/>
            <person name="Krijgsveld J."/>
            <person name="Heck A.J."/>
            <person name="Mohammed S."/>
        </authorList>
    </citation>
    <scope>IDENTIFICATION BY MASS SPECTROMETRY [LARGE SCALE ANALYSIS]</scope>
</reference>
<reference key="13">
    <citation type="journal article" date="2009" name="BMJ Case Rep.">
        <title>Nonsense mutation in pseudouridylate synthase 1 (PUS1) in two brothers affected by myopathy, lactic acidosis and sideroblastic anaemia (MLASA).</title>
        <authorList>
            <person name="Fernandez-Vizarra E."/>
            <person name="Berardinelli A."/>
            <person name="Valente L."/>
            <person name="Tiranti V."/>
            <person name="Zeviani M."/>
        </authorList>
    </citation>
    <scope>VARIANT MLASA1 220-GLU--ASP-427 DEL</scope>
</reference>
<reference key="14">
    <citation type="journal article" date="2010" name="Pediatr. Blood Cancer">
        <title>Systematic molecular genetic analysis of congenital sideroblastic anemia: evidence for genetic heterogeneity and identification of novel mutations.</title>
        <authorList>
            <person name="Bergmann A.K."/>
            <person name="Campagna D.R."/>
            <person name="McLoughlin E.M."/>
            <person name="Agarwal S."/>
            <person name="Fleming M.D."/>
            <person name="Bottomley S.S."/>
            <person name="Neufeld E.J."/>
        </authorList>
    </citation>
    <scope>VARIANT MLASA1 TRP-144</scope>
</reference>
<reference key="15">
    <citation type="journal article" date="2010" name="Sci. Signal.">
        <title>Quantitative phosphoproteomics reveals widespread full phosphorylation site occupancy during mitosis.</title>
        <authorList>
            <person name="Olsen J.V."/>
            <person name="Vermeulen M."/>
            <person name="Santamaria A."/>
            <person name="Kumar C."/>
            <person name="Miller M.L."/>
            <person name="Jensen L.J."/>
            <person name="Gnad F."/>
            <person name="Cox J."/>
            <person name="Jensen T.S."/>
            <person name="Nigg E.A."/>
            <person name="Brunak S."/>
            <person name="Mann M."/>
        </authorList>
    </citation>
    <scope>PHOSPHORYLATION [LARGE SCALE ANALYSIS] AT SER-415; SER-420 AND THR-426</scope>
    <scope>IDENTIFICATION BY MASS SPECTROMETRY [LARGE SCALE ANALYSIS]</scope>
    <source>
        <tissue>Cervix carcinoma</tissue>
    </source>
</reference>
<reference key="16">
    <citation type="journal article" date="2011" name="BMC Syst. Biol.">
        <title>Initial characterization of the human central proteome.</title>
        <authorList>
            <person name="Burkard T.R."/>
            <person name="Planyavsky M."/>
            <person name="Kaupe I."/>
            <person name="Breitwieser F.P."/>
            <person name="Buerckstuemmer T."/>
            <person name="Bennett K.L."/>
            <person name="Superti-Furga G."/>
            <person name="Colinge J."/>
        </authorList>
    </citation>
    <scope>IDENTIFICATION BY MASS SPECTROMETRY [LARGE SCALE ANALYSIS]</scope>
</reference>
<reference key="17">
    <citation type="journal article" date="2011" name="Sci. Signal.">
        <title>System-wide temporal characterization of the proteome and phosphoproteome of human embryonic stem cell differentiation.</title>
        <authorList>
            <person name="Rigbolt K.T."/>
            <person name="Prokhorova T.A."/>
            <person name="Akimov V."/>
            <person name="Henningsen J."/>
            <person name="Johansen P.T."/>
            <person name="Kratchmarova I."/>
            <person name="Kassem M."/>
            <person name="Mann M."/>
            <person name="Olsen J.V."/>
            <person name="Blagoev B."/>
        </authorList>
    </citation>
    <scope>PHOSPHORYLATION [LARGE SCALE ANALYSIS] AT SER-420 AND THR-426</scope>
    <scope>IDENTIFICATION BY MASS SPECTROMETRY [LARGE SCALE ANALYSIS]</scope>
</reference>
<reference key="18">
    <citation type="journal article" date="2012" name="Proc. Natl. Acad. Sci. U.S.A.">
        <title>N-terminal acetylome analyses and functional insights of the N-terminal acetyltransferase NatB.</title>
        <authorList>
            <person name="Van Damme P."/>
            <person name="Lasa M."/>
            <person name="Polevoda B."/>
            <person name="Gazquez C."/>
            <person name="Elosegui-Artola A."/>
            <person name="Kim D.S."/>
            <person name="De Juan-Pardo E."/>
            <person name="Demeyer K."/>
            <person name="Hole K."/>
            <person name="Larrea E."/>
            <person name="Timmerman E."/>
            <person name="Prieto J."/>
            <person name="Arnesen T."/>
            <person name="Sherman F."/>
            <person name="Gevaert K."/>
            <person name="Aldabe R."/>
        </authorList>
    </citation>
    <scope>IDENTIFICATION BY MASS SPECTROMETRY [LARGE SCALE ANALYSIS]</scope>
</reference>
<reference key="19">
    <citation type="journal article" date="2013" name="J. Proteome Res.">
        <title>Toward a comprehensive characterization of a human cancer cell phosphoproteome.</title>
        <authorList>
            <person name="Zhou H."/>
            <person name="Di Palma S."/>
            <person name="Preisinger C."/>
            <person name="Peng M."/>
            <person name="Polat A.N."/>
            <person name="Heck A.J."/>
            <person name="Mohammed S."/>
        </authorList>
    </citation>
    <scope>PHOSPHORYLATION [LARGE SCALE ANALYSIS] AT SER-420 AND THR-426</scope>
    <scope>IDENTIFICATION BY MASS SPECTROMETRY [LARGE SCALE ANALYSIS]</scope>
    <source>
        <tissue>Cervix carcinoma</tissue>
        <tissue>Erythroleukemia</tissue>
    </source>
</reference>
<reference key="20">
    <citation type="journal article" date="2014" name="J. Proteomics">
        <title>An enzyme assisted RP-RPLC approach for in-depth analysis of human liver phosphoproteome.</title>
        <authorList>
            <person name="Bian Y."/>
            <person name="Song C."/>
            <person name="Cheng K."/>
            <person name="Dong M."/>
            <person name="Wang F."/>
            <person name="Huang J."/>
            <person name="Sun D."/>
            <person name="Wang L."/>
            <person name="Ye M."/>
            <person name="Zou H."/>
        </authorList>
    </citation>
    <scope>PHOSPHORYLATION [LARGE SCALE ANALYSIS] AT SER-420 AND THR-426</scope>
    <scope>IDENTIFICATION BY MASS SPECTROMETRY [LARGE SCALE ANALYSIS]</scope>
    <source>
        <tissue>Liver</tissue>
    </source>
</reference>
<reference key="21">
    <citation type="journal article" date="2015" name="Eur. J. Hum. Genet.">
        <title>Unusual clinical expression and long survival of a pseudouridylate synthase (PUS1) mutation into adulthood.</title>
        <authorList>
            <person name="Metodiev M.D."/>
            <person name="Assouline Z."/>
            <person name="Landrieu P."/>
            <person name="Chretien D."/>
            <person name="Bader-Meunier B."/>
            <person name="Guitton C."/>
            <person name="Munnich A."/>
            <person name="Roetig A."/>
        </authorList>
    </citation>
    <scope>VARIANT MLASA1 TRP-295</scope>
</reference>
<reference key="22">
    <citation type="journal article" date="2015" name="Proteomics">
        <title>N-terminome analysis of the human mitochondrial proteome.</title>
        <authorList>
            <person name="Vaca Jacome A.S."/>
            <person name="Rabilloud T."/>
            <person name="Schaeffer-Reiss C."/>
            <person name="Rompais M."/>
            <person name="Ayoub D."/>
            <person name="Lane L."/>
            <person name="Bairoch A."/>
            <person name="Van Dorsselaer A."/>
            <person name="Carapito C."/>
        </authorList>
    </citation>
    <scope>IDENTIFICATION BY MASS SPECTROMETRY [LARGE SCALE ANALYSIS]</scope>
</reference>
<reference key="23">
    <citation type="journal article" date="2016" name="Neurogenetics">
        <title>Clinical and molecular study in a long-surviving patient with MLASA syndrome due to novel PUS1 mutations.</title>
        <authorList>
            <person name="Cao M."/>
            <person name="Dona M."/>
            <person name="Valentino M.L."/>
            <person name="Valentino L."/>
            <person name="Semplicini C."/>
            <person name="Maresca A."/>
            <person name="Cassina M."/>
            <person name="Torraco A."/>
            <person name="Galletta E."/>
            <person name="Manfioli V."/>
            <person name="Soraru G."/>
            <person name="Carelli V."/>
            <person name="Stramare R."/>
            <person name="Bertini E."/>
            <person name="Carrozzo R."/>
            <person name="Salviati L."/>
            <person name="Pegoraro E."/>
        </authorList>
    </citation>
    <scope>VARIANT MLASA1 GLN-295</scope>
</reference>
<reference key="24">
    <citation type="journal article" date="2017" name="Turk. J. Haematol.">
        <title>A myopathy, lactic acidosis, sideroblastic anemia (MLASA) case due to a novel PUS1 mutation.</title>
        <authorList>
            <person name="Kasapkara C.S."/>
            <person name="Tuemer L."/>
            <person name="Zanetti N."/>
            <person name="Ezgue F."/>
            <person name="Lamantea E."/>
            <person name="Zeviani M."/>
        </authorList>
    </citation>
    <scope>VARIANT MLASA1 ARG-101</scope>
</reference>
<reference key="25">
    <citation type="journal article" date="2019" name="Nat. Chem. Biol.">
        <title>mRNA structure determines modification by pseudouridine synthase 1.</title>
        <authorList>
            <person name="Carlile T.M."/>
            <person name="Martinez N.M."/>
            <person name="Schaening C."/>
            <person name="Su A."/>
            <person name="Bell T.A."/>
            <person name="Zinshteyn B."/>
            <person name="Gilbert W.V."/>
        </authorList>
    </citation>
    <scope>FUNCTION</scope>
    <scope>CATALYTIC ACTIVITY</scope>
</reference>
<reference key="26">
    <citation type="journal article" date="2021" name="J. Pediatr. Hematol. Oncol.">
        <title>A novel PUS1 mutation in 2 siblings with MLASA syndrome: a review of the literature.</title>
        <authorList>
            <person name="Oncul U."/>
            <person name="Unal-Ince E."/>
            <person name="Kuloglu Z."/>
            <person name="Teber-Tiras S."/>
            <person name="Kaygusuz G."/>
            <person name="Eminoglu F.T."/>
        </authorList>
    </citation>
    <scope>VARIANT MLASA1 311-GLU--ASP-427 DEL</scope>
</reference>
<reference key="27">
    <citation type="journal article" date="2022" name="Mol. Cell">
        <title>Pseudouridine synthases modify human pre-mRNA co-transcriptionally and affect pre-mRNA processing.</title>
        <authorList>
            <person name="Martinez N.M."/>
            <person name="Su A."/>
            <person name="Burns M.C."/>
            <person name="Nussbacher J.K."/>
            <person name="Schaening C."/>
            <person name="Sathe S."/>
            <person name="Yeo G.W."/>
            <person name="Gilbert W.V."/>
        </authorList>
    </citation>
    <scope>FUNCTION</scope>
    <scope>CATALYTIC ACTIVITY</scope>
</reference>
<reference evidence="27 28 29" key="28">
    <citation type="journal article" date="2013" name="J. Mol. Biol.">
        <title>In human pseudouridine synthase 1 (hPus1), a C-terminal helical insert blocks tRNA from binding in the same orientation as in the Pus1 bacterial homologue TruA, consistent with their different target selectivities.</title>
        <authorList>
            <person name="Czudnochowski N."/>
            <person name="Wang A.L."/>
            <person name="Finer-Moore J."/>
            <person name="Stroud R.M."/>
        </authorList>
    </citation>
    <scope>X-RAY CRYSTALLOGRAPHY (1.75 ANGSTROMS) OF 79-408</scope>
    <scope>SUBUNIT</scope>
</reference>
<reference evidence="30 31" key="29">
    <citation type="journal article" date="2014" name="PLoS ONE">
        <title>Steroid receptor RNA activator (SRA) modification by the human pseudouridine synthase 1 (hPus1p): RNA binding, activity, and atomic model.</title>
        <authorList>
            <person name="Huet T."/>
            <person name="Miannay F.A."/>
            <person name="Patton J.R."/>
            <person name="Thore S."/>
        </authorList>
    </citation>
    <scope>X-RAY CRYSTALLOGRAPHY (2.00 ANGSTROMS) OF 83-394 OF WILD-TYPE AND MUTANT ALA-146</scope>
    <scope>FUNCTION</scope>
    <scope>ACTIVE SITE</scope>
    <scope>MUTAGENESIS OF ASP-146</scope>
    <scope>SUBUNIT</scope>
</reference>
<proteinExistence type="evidence at protein level"/>
<sequence>MGLQLRALLGAFGRWTLRLGPRPSCSPRMAGNAEPPPAGAACPQDRRSCSGRAGGDRVWEDGEHPAKKLKSGGDEERREKPPKRKIVLLMAYSGKGYHGMQRNVGSSQFKTIEDDLVSALVRSGCIPENHGEDMRKMSFQRCARTDKGVSAAGQVVSLKVWLIDDILEKINSHLPSHIRILGLKRVTGGFNSKNRCDARTYCYLLPTFAFAHKDRDVQDETYRLSAETLQQVNRLLACYKGTHNFHNFTSQKGPQDPSACRYILEMYCEEPFVREGLEFAVIRVKGQSFMMHQIRKMVGLVVAIVKGYAPESVLERSWGTEKVDVPKAPGLGLVLERVHFEKYNQRFGNDGLHEPLDWAQEEGKVAAFKEEHIYPTIIGTERDERSMAQWLSTLPIHNFSATALTAGGTGAKVPSPLEGSEGDGDTD</sequence>
<keyword id="KW-0002">3D-structure</keyword>
<keyword id="KW-0025">Alternative splicing</keyword>
<keyword id="KW-0963">Cytoplasm</keyword>
<keyword id="KW-0225">Disease variant</keyword>
<keyword id="KW-0413">Isomerase</keyword>
<keyword id="KW-0496">Mitochondrion</keyword>
<keyword id="KW-0507">mRNA processing</keyword>
<keyword id="KW-0508">mRNA splicing</keyword>
<keyword id="KW-0539">Nucleus</keyword>
<keyword id="KW-0597">Phosphoprotein</keyword>
<keyword id="KW-1274">Primary mitochondrial disease</keyword>
<keyword id="KW-1267">Proteomics identification</keyword>
<keyword id="KW-1185">Reference proteome</keyword>
<keyword id="KW-0809">Transit peptide</keyword>
<keyword id="KW-0819">tRNA processing</keyword>
<gene>
    <name evidence="22 26" type="primary">PUS1</name>
    <name evidence="21" type="ORF">PP8985</name>
</gene>
<accession>Q9Y606</accession>
<accession>A8K877</accession>
<accession>B3KQC1</accession>
<accession>Q8WYT2</accession>
<accession>Q9BU44</accession>
<protein>
    <recommendedName>
        <fullName evidence="23">Pseudouridylate synthase 1 homolog</fullName>
        <ecNumber evidence="16 18 25">5.4.99.-</ecNumber>
    </recommendedName>
    <alternativeName>
        <fullName evidence="23">tRNA pseudouridine synthase 1</fullName>
        <ecNumber evidence="25">5.4.99.12</ecNumber>
    </alternativeName>
    <alternativeName>
        <fullName>tRNA pseudouridine(38-40) synthase</fullName>
    </alternativeName>
    <alternativeName>
        <fullName>tRNA pseudouridylate synthase I</fullName>
    </alternativeName>
    <alternativeName>
        <fullName>tRNA-uridine isomerase I</fullName>
    </alternativeName>
</protein>
<name>PUS1_HUMAN</name>
<organism>
    <name type="scientific">Homo sapiens</name>
    <name type="common">Human</name>
    <dbReference type="NCBI Taxonomy" id="9606"/>
    <lineage>
        <taxon>Eukaryota</taxon>
        <taxon>Metazoa</taxon>
        <taxon>Chordata</taxon>
        <taxon>Craniata</taxon>
        <taxon>Vertebrata</taxon>
        <taxon>Euteleostomi</taxon>
        <taxon>Mammalia</taxon>
        <taxon>Eutheria</taxon>
        <taxon>Euarchontoglires</taxon>
        <taxon>Primates</taxon>
        <taxon>Haplorrhini</taxon>
        <taxon>Catarrhini</taxon>
        <taxon>Hominidae</taxon>
        <taxon>Homo</taxon>
    </lineage>
</organism>
<dbReference type="EC" id="5.4.99.-" evidence="16 18 25"/>
<dbReference type="EC" id="5.4.99.12" evidence="25"/>
<dbReference type="EMBL" id="AF318369">
    <property type="protein sequence ID" value="AAL55876.1"/>
    <property type="molecule type" value="mRNA"/>
</dbReference>
<dbReference type="EMBL" id="AK074659">
    <property type="protein sequence ID" value="BAG51983.1"/>
    <property type="molecule type" value="mRNA"/>
</dbReference>
<dbReference type="EMBL" id="AK292242">
    <property type="protein sequence ID" value="BAF84931.1"/>
    <property type="molecule type" value="mRNA"/>
</dbReference>
<dbReference type="EMBL" id="BC002901">
    <property type="protein sequence ID" value="AAH02901.1"/>
    <property type="molecule type" value="mRNA"/>
</dbReference>
<dbReference type="EMBL" id="BC009505">
    <property type="protein sequence ID" value="AAH09505.2"/>
    <property type="molecule type" value="mRNA"/>
</dbReference>
<dbReference type="EMBL" id="BC019320">
    <property type="protein sequence ID" value="AAH19320.2"/>
    <property type="molecule type" value="mRNA"/>
</dbReference>
<dbReference type="EMBL" id="AF116238">
    <property type="protein sequence ID" value="AAD21042.1"/>
    <property type="molecule type" value="mRNA"/>
</dbReference>
<dbReference type="CCDS" id="CCDS31928.1">
    <molecule id="Q9Y606-2"/>
</dbReference>
<dbReference type="CCDS" id="CCDS9275.2">
    <molecule id="Q9Y606-1"/>
</dbReference>
<dbReference type="RefSeq" id="NP_001002019.1">
    <molecule id="Q9Y606-2"/>
    <property type="nucleotide sequence ID" value="NM_001002019.3"/>
</dbReference>
<dbReference type="RefSeq" id="NP_001002020.1">
    <molecule id="Q9Y606-2"/>
    <property type="nucleotide sequence ID" value="NM_001002020.3"/>
</dbReference>
<dbReference type="RefSeq" id="NP_079491.2">
    <molecule id="Q9Y606-1"/>
    <property type="nucleotide sequence ID" value="NM_025215.6"/>
</dbReference>
<dbReference type="PDB" id="4IQM">
    <property type="method" value="X-ray"/>
    <property type="resolution" value="1.80 A"/>
    <property type="chains" value="A=79-408"/>
</dbReference>
<dbReference type="PDB" id="4ITS">
    <property type="method" value="X-ray"/>
    <property type="resolution" value="1.85 A"/>
    <property type="chains" value="A=79-408"/>
</dbReference>
<dbReference type="PDB" id="4J37">
    <property type="method" value="X-ray"/>
    <property type="resolution" value="1.75 A"/>
    <property type="chains" value="A=79-408"/>
</dbReference>
<dbReference type="PDB" id="4NZ6">
    <property type="method" value="X-ray"/>
    <property type="resolution" value="2.00 A"/>
    <property type="chains" value="A/B=83-394"/>
</dbReference>
<dbReference type="PDB" id="4NZ7">
    <property type="method" value="X-ray"/>
    <property type="resolution" value="2.70 A"/>
    <property type="chains" value="A=83-394"/>
</dbReference>
<dbReference type="PDBsum" id="4IQM"/>
<dbReference type="PDBsum" id="4ITS"/>
<dbReference type="PDBsum" id="4J37"/>
<dbReference type="PDBsum" id="4NZ6"/>
<dbReference type="PDBsum" id="4NZ7"/>
<dbReference type="SMR" id="Q9Y606"/>
<dbReference type="BioGRID" id="123236">
    <property type="interactions" value="148"/>
</dbReference>
<dbReference type="FunCoup" id="Q9Y606">
    <property type="interactions" value="4138"/>
</dbReference>
<dbReference type="IntAct" id="Q9Y606">
    <property type="interactions" value="54"/>
</dbReference>
<dbReference type="MINT" id="Q9Y606"/>
<dbReference type="STRING" id="9606.ENSP00000365837"/>
<dbReference type="GlyGen" id="Q9Y606">
    <property type="glycosylation" value="1 site, 1 O-linked glycan (1 site)"/>
</dbReference>
<dbReference type="iPTMnet" id="Q9Y606"/>
<dbReference type="PhosphoSitePlus" id="Q9Y606"/>
<dbReference type="SwissPalm" id="Q9Y606"/>
<dbReference type="BioMuta" id="PUS1"/>
<dbReference type="DMDM" id="114152895"/>
<dbReference type="jPOST" id="Q9Y606"/>
<dbReference type="MassIVE" id="Q9Y606"/>
<dbReference type="PaxDb" id="9606-ENSP00000365837"/>
<dbReference type="PeptideAtlas" id="Q9Y606"/>
<dbReference type="ProteomicsDB" id="86569">
    <molecule id="Q9Y606-1"/>
</dbReference>
<dbReference type="ProteomicsDB" id="86570">
    <molecule id="Q9Y606-2"/>
</dbReference>
<dbReference type="Pumba" id="Q9Y606"/>
<dbReference type="Antibodypedia" id="32008">
    <property type="antibodies" value="169 antibodies from 28 providers"/>
</dbReference>
<dbReference type="DNASU" id="80324"/>
<dbReference type="Ensembl" id="ENST00000376649.8">
    <molecule id="Q9Y606-1"/>
    <property type="protein sequence ID" value="ENSP00000365837.3"/>
    <property type="gene ID" value="ENSG00000177192.14"/>
</dbReference>
<dbReference type="Ensembl" id="ENST00000443358.6">
    <molecule id="Q9Y606-2"/>
    <property type="protein sequence ID" value="ENSP00000392451.2"/>
    <property type="gene ID" value="ENSG00000177192.14"/>
</dbReference>
<dbReference type="GeneID" id="80324"/>
<dbReference type="KEGG" id="hsa:80324"/>
<dbReference type="MANE-Select" id="ENST00000376649.8">
    <property type="protein sequence ID" value="ENSP00000365837.3"/>
    <property type="RefSeq nucleotide sequence ID" value="NM_025215.6"/>
    <property type="RefSeq protein sequence ID" value="NP_079491.2"/>
</dbReference>
<dbReference type="UCSC" id="uc001ujf.4">
    <molecule id="Q9Y606-1"/>
    <property type="organism name" value="human"/>
</dbReference>
<dbReference type="AGR" id="HGNC:15508"/>
<dbReference type="CTD" id="80324"/>
<dbReference type="DisGeNET" id="80324"/>
<dbReference type="GeneCards" id="PUS1"/>
<dbReference type="HGNC" id="HGNC:15508">
    <property type="gene designation" value="PUS1"/>
</dbReference>
<dbReference type="HPA" id="ENSG00000177192">
    <property type="expression patterns" value="Low tissue specificity"/>
</dbReference>
<dbReference type="MalaCards" id="PUS1"/>
<dbReference type="MIM" id="600462">
    <property type="type" value="phenotype"/>
</dbReference>
<dbReference type="MIM" id="608109">
    <property type="type" value="gene"/>
</dbReference>
<dbReference type="neXtProt" id="NX_Q9Y606"/>
<dbReference type="OpenTargets" id="ENSG00000177192"/>
<dbReference type="Orphanet" id="2598">
    <property type="disease" value="Mitochondrial myopathy and sideroblastic anemia"/>
</dbReference>
<dbReference type="PharmGKB" id="PA34047"/>
<dbReference type="VEuPathDB" id="HostDB:ENSG00000177192"/>
<dbReference type="eggNOG" id="KOG2553">
    <property type="taxonomic scope" value="Eukaryota"/>
</dbReference>
<dbReference type="GeneTree" id="ENSGT00950000183160"/>
<dbReference type="InParanoid" id="Q9Y606"/>
<dbReference type="OMA" id="CDARTYT"/>
<dbReference type="OrthoDB" id="9474657at2759"/>
<dbReference type="PAN-GO" id="Q9Y606">
    <property type="GO annotations" value="4 GO annotations based on evolutionary models"/>
</dbReference>
<dbReference type="PhylomeDB" id="Q9Y606"/>
<dbReference type="TreeFam" id="TF314367"/>
<dbReference type="BRENDA" id="5.4.99.B22">
    <property type="organism ID" value="2681"/>
</dbReference>
<dbReference type="PathwayCommons" id="Q9Y606"/>
<dbReference type="Reactome" id="R-HSA-6782315">
    <molecule id="Q9Y606-2"/>
    <property type="pathway name" value="tRNA modification in the nucleus and cytosol"/>
</dbReference>
<dbReference type="Reactome" id="R-HSA-6787450">
    <molecule id="Q9Y606-1"/>
    <property type="pathway name" value="tRNA modification in the mitochondrion"/>
</dbReference>
<dbReference type="SignaLink" id="Q9Y606"/>
<dbReference type="BioGRID-ORCS" id="80324">
    <property type="hits" value="40 hits in 1168 CRISPR screens"/>
</dbReference>
<dbReference type="CD-CODE" id="91857CE7">
    <property type="entry name" value="Nucleolus"/>
</dbReference>
<dbReference type="ChiTaRS" id="PUS1">
    <property type="organism name" value="human"/>
</dbReference>
<dbReference type="EvolutionaryTrace" id="Q9Y606"/>
<dbReference type="GeneWiki" id="PUS1"/>
<dbReference type="GenomeRNAi" id="80324"/>
<dbReference type="Pharos" id="Q9Y606">
    <property type="development level" value="Tbio"/>
</dbReference>
<dbReference type="PRO" id="PR:Q9Y606"/>
<dbReference type="Proteomes" id="UP000005640">
    <property type="component" value="Chromosome 12"/>
</dbReference>
<dbReference type="RNAct" id="Q9Y606">
    <property type="molecule type" value="protein"/>
</dbReference>
<dbReference type="Bgee" id="ENSG00000177192">
    <property type="expression patterns" value="Expressed in granulocyte and 154 other cell types or tissues"/>
</dbReference>
<dbReference type="ExpressionAtlas" id="Q9Y606">
    <property type="expression patterns" value="baseline and differential"/>
</dbReference>
<dbReference type="GO" id="GO:0005737">
    <property type="term" value="C:cytoplasm"/>
    <property type="evidence" value="ECO:0000314"/>
    <property type="project" value="UniProtKB"/>
</dbReference>
<dbReference type="GO" id="GO:0005759">
    <property type="term" value="C:mitochondrial matrix"/>
    <property type="evidence" value="ECO:0000304"/>
    <property type="project" value="Reactome"/>
</dbReference>
<dbReference type="GO" id="GO:0005739">
    <property type="term" value="C:mitochondrion"/>
    <property type="evidence" value="ECO:0000314"/>
    <property type="project" value="HPA"/>
</dbReference>
<dbReference type="GO" id="GO:0005730">
    <property type="term" value="C:nucleolus"/>
    <property type="evidence" value="ECO:0007669"/>
    <property type="project" value="Ensembl"/>
</dbReference>
<dbReference type="GO" id="GO:0005654">
    <property type="term" value="C:nucleoplasm"/>
    <property type="evidence" value="ECO:0000314"/>
    <property type="project" value="HPA"/>
</dbReference>
<dbReference type="GO" id="GO:0005634">
    <property type="term" value="C:nucleus"/>
    <property type="evidence" value="ECO:0000314"/>
    <property type="project" value="UniProtKB"/>
</dbReference>
<dbReference type="GO" id="GO:0005667">
    <property type="term" value="C:transcription regulator complex"/>
    <property type="evidence" value="ECO:0007669"/>
    <property type="project" value="Ensembl"/>
</dbReference>
<dbReference type="GO" id="GO:0003682">
    <property type="term" value="F:chromatin binding"/>
    <property type="evidence" value="ECO:0007669"/>
    <property type="project" value="Ensembl"/>
</dbReference>
<dbReference type="GO" id="GO:0009982">
    <property type="term" value="F:pseudouridine synthase activity"/>
    <property type="evidence" value="ECO:0000314"/>
    <property type="project" value="UniProtKB"/>
</dbReference>
<dbReference type="GO" id="GO:0003723">
    <property type="term" value="F:RNA binding"/>
    <property type="evidence" value="ECO:0007005"/>
    <property type="project" value="UniProtKB"/>
</dbReference>
<dbReference type="GO" id="GO:0002153">
    <property type="term" value="F:steroid receptor RNA activator RNA binding"/>
    <property type="evidence" value="ECO:0000314"/>
    <property type="project" value="UniProtKB"/>
</dbReference>
<dbReference type="GO" id="GO:0003713">
    <property type="term" value="F:transcription coactivator activity"/>
    <property type="evidence" value="ECO:0007669"/>
    <property type="project" value="Ensembl"/>
</dbReference>
<dbReference type="GO" id="GO:0000049">
    <property type="term" value="F:tRNA binding"/>
    <property type="evidence" value="ECO:0000314"/>
    <property type="project" value="UniProtKB"/>
</dbReference>
<dbReference type="GO" id="GO:0160147">
    <property type="term" value="F:tRNA pseudouridine(38-40) synthase activity"/>
    <property type="evidence" value="ECO:0007669"/>
    <property type="project" value="UniProtKB-EC"/>
</dbReference>
<dbReference type="GO" id="GO:0070902">
    <property type="term" value="P:mitochondrial tRNA pseudouridine synthesis"/>
    <property type="evidence" value="ECO:0000304"/>
    <property type="project" value="Reactome"/>
</dbReference>
<dbReference type="GO" id="GO:0006397">
    <property type="term" value="P:mRNA processing"/>
    <property type="evidence" value="ECO:0007669"/>
    <property type="project" value="UniProtKB-KW"/>
</dbReference>
<dbReference type="GO" id="GO:1990481">
    <property type="term" value="P:mRNA pseudouridine synthesis"/>
    <property type="evidence" value="ECO:0000314"/>
    <property type="project" value="UniProtKB"/>
</dbReference>
<dbReference type="GO" id="GO:0045944">
    <property type="term" value="P:positive regulation of transcription by RNA polymerase II"/>
    <property type="evidence" value="ECO:0007669"/>
    <property type="project" value="Ensembl"/>
</dbReference>
<dbReference type="GO" id="GO:0008380">
    <property type="term" value="P:RNA splicing"/>
    <property type="evidence" value="ECO:0007669"/>
    <property type="project" value="UniProtKB-KW"/>
</dbReference>
<dbReference type="GO" id="GO:0031119">
    <property type="term" value="P:tRNA pseudouridine synthesis"/>
    <property type="evidence" value="ECO:0000315"/>
    <property type="project" value="UniProtKB"/>
</dbReference>
<dbReference type="CDD" id="cd02568">
    <property type="entry name" value="PseudoU_synth_PUS1_PUS2"/>
    <property type="match status" value="1"/>
</dbReference>
<dbReference type="FunFam" id="3.30.70.580:FF:000002">
    <property type="entry name" value="tRNA pseudouridine synthase"/>
    <property type="match status" value="1"/>
</dbReference>
<dbReference type="FunFam" id="3.30.70.660:FF:000002">
    <property type="entry name" value="tRNA pseudouridine synthase"/>
    <property type="match status" value="1"/>
</dbReference>
<dbReference type="Gene3D" id="3.30.70.660">
    <property type="entry name" value="Pseudouridine synthase I, catalytic domain, C-terminal subdomain"/>
    <property type="match status" value="1"/>
</dbReference>
<dbReference type="Gene3D" id="3.30.70.580">
    <property type="entry name" value="Pseudouridine synthase I, catalytic domain, N-terminal subdomain"/>
    <property type="match status" value="1"/>
</dbReference>
<dbReference type="InterPro" id="IPR020103">
    <property type="entry name" value="PsdUridine_synth_cat_dom_sf"/>
</dbReference>
<dbReference type="InterPro" id="IPR001406">
    <property type="entry name" value="PsdUridine_synth_TruA"/>
</dbReference>
<dbReference type="InterPro" id="IPR020097">
    <property type="entry name" value="PsdUridine_synth_TruA_a/b_dom"/>
</dbReference>
<dbReference type="InterPro" id="IPR020095">
    <property type="entry name" value="PsdUridine_synth_TruA_C"/>
</dbReference>
<dbReference type="InterPro" id="IPR041708">
    <property type="entry name" value="PUS1/PUS2-like"/>
</dbReference>
<dbReference type="InterPro" id="IPR020094">
    <property type="entry name" value="TruA/RsuA/RluB/E/F_N"/>
</dbReference>
<dbReference type="NCBIfam" id="TIGR00071">
    <property type="entry name" value="hisT_truA"/>
    <property type="match status" value="1"/>
</dbReference>
<dbReference type="PANTHER" id="PTHR11142">
    <property type="entry name" value="PSEUDOURIDYLATE SYNTHASE"/>
    <property type="match status" value="1"/>
</dbReference>
<dbReference type="PANTHER" id="PTHR11142:SF4">
    <property type="entry name" value="PSEUDOURIDYLATE SYNTHASE 1 HOMOLOG"/>
    <property type="match status" value="1"/>
</dbReference>
<dbReference type="Pfam" id="PF01416">
    <property type="entry name" value="PseudoU_synth_1"/>
    <property type="match status" value="1"/>
</dbReference>
<dbReference type="SUPFAM" id="SSF55120">
    <property type="entry name" value="Pseudouridine synthase"/>
    <property type="match status" value="1"/>
</dbReference>
<feature type="transit peptide" description="Mitochondrion" evidence="2">
    <location>
        <begin position="1"/>
        <end status="unknown"/>
    </location>
</feature>
<feature type="chain" id="PRO_0000057517" description="Pseudouridylate synthase 1 homolog">
    <location>
        <begin status="unknown"/>
        <end position="427"/>
    </location>
</feature>
<feature type="region of interest" description="Disordered" evidence="3">
    <location>
        <begin position="20"/>
        <end position="83"/>
    </location>
</feature>
<feature type="region of interest" description="Disordered" evidence="3">
    <location>
        <begin position="407"/>
        <end position="427"/>
    </location>
</feature>
<feature type="compositionally biased region" description="Basic and acidic residues" evidence="3">
    <location>
        <begin position="44"/>
        <end position="79"/>
    </location>
</feature>
<feature type="active site" description="Nucleophile" evidence="12 28 30">
    <location>
        <position position="146"/>
    </location>
</feature>
<feature type="modified residue" description="Phosphoserine" evidence="34">
    <location>
        <position position="415"/>
    </location>
</feature>
<feature type="modified residue" description="Phosphoserine" evidence="32 33 34 35 36 37">
    <location>
        <position position="420"/>
    </location>
</feature>
<feature type="modified residue" description="Phosphothreonine" evidence="32 33 34 35 36 37">
    <location>
        <position position="426"/>
    </location>
</feature>
<feature type="splice variant" id="VSP_020116" description="In isoform 2." evidence="19 20">
    <location>
        <begin position="1"/>
        <end position="28"/>
    </location>
</feature>
<feature type="sequence variant" id="VAR_086155" description="In MLASA1; uncertain significance; dbSNP:rs753164046." evidence="15">
    <original>Q</original>
    <variation>R</variation>
    <location>
        <position position="101"/>
    </location>
</feature>
<feature type="sequence variant" id="VAR_036447" description="In dbSNP:rs76655496." evidence="7">
    <original>D</original>
    <variation>N</variation>
    <location>
        <position position="133"/>
    </location>
</feature>
<feature type="sequence variant" id="VAR_021788" description="In MLASA1; dbSNP:rs104894371." evidence="4 9">
    <original>R</original>
    <variation>W</variation>
    <location>
        <position position="144"/>
    </location>
</feature>
<feature type="sequence variant" id="VAR_086156" description="In MLASA1." evidence="8 10">
    <location>
        <begin position="220"/>
        <end position="427"/>
    </location>
</feature>
<feature type="sequence variant" id="VAR_086157" description="In MLASA1; uncertain significance; mild phenotype; dbSNP:rs1045133170." evidence="14">
    <original>R</original>
    <variation>Q</variation>
    <location>
        <position position="295"/>
    </location>
</feature>
<feature type="sequence variant" id="VAR_086158" description="In MLASA1; uncertain significance; mild phenotype; dbSNP:rs869025309." evidence="13">
    <original>R</original>
    <variation>W</variation>
    <location>
        <position position="295"/>
    </location>
</feature>
<feature type="sequence variant" id="VAR_086159" description="In MLASA1." evidence="17">
    <location>
        <begin position="311"/>
        <end position="427"/>
    </location>
</feature>
<feature type="mutagenesis site" description="Loss of enzyme activity." evidence="12">
    <original>D</original>
    <variation>A</variation>
    <location>
        <position position="146"/>
    </location>
</feature>
<feature type="sequence conflict" description="In Ref. 4; AAD21042." evidence="23" ref="4">
    <original>K</original>
    <variation>R</variation>
    <location>
        <position position="70"/>
    </location>
</feature>
<feature type="strand" evidence="39">
    <location>
        <begin position="83"/>
        <end position="92"/>
    </location>
</feature>
<feature type="strand" evidence="38">
    <location>
        <begin position="99"/>
        <end position="101"/>
    </location>
</feature>
<feature type="helix" evidence="39">
    <location>
        <begin position="112"/>
        <end position="122"/>
    </location>
</feature>
<feature type="helix" evidence="39">
    <location>
        <begin position="128"/>
        <end position="132"/>
    </location>
</feature>
<feature type="helix" evidence="39">
    <location>
        <begin position="134"/>
        <end position="137"/>
    </location>
</feature>
<feature type="strand" evidence="39">
    <location>
        <begin position="140"/>
        <end position="142"/>
    </location>
</feature>
<feature type="strand" evidence="39">
    <location>
        <begin position="150"/>
        <end position="161"/>
    </location>
</feature>
<feature type="helix" evidence="39">
    <location>
        <begin position="166"/>
        <end position="172"/>
    </location>
</feature>
<feature type="strand" evidence="39">
    <location>
        <begin position="178"/>
        <end position="186"/>
    </location>
</feature>
<feature type="helix" evidence="38">
    <location>
        <begin position="192"/>
        <end position="195"/>
    </location>
</feature>
<feature type="strand" evidence="39">
    <location>
        <begin position="198"/>
        <end position="206"/>
    </location>
</feature>
<feature type="helix" evidence="39">
    <location>
        <begin position="207"/>
        <end position="210"/>
    </location>
</feature>
<feature type="turn" evidence="39">
    <location>
        <begin position="213"/>
        <end position="215"/>
    </location>
</feature>
<feature type="helix" evidence="39">
    <location>
        <begin position="226"/>
        <end position="238"/>
    </location>
</feature>
<feature type="strand" evidence="39">
    <location>
        <begin position="241"/>
        <end position="244"/>
    </location>
</feature>
<feature type="helix" evidence="39">
    <location>
        <begin position="246"/>
        <end position="248"/>
    </location>
</feature>
<feature type="strand" evidence="38">
    <location>
        <begin position="249"/>
        <end position="251"/>
    </location>
</feature>
<feature type="strand" evidence="39">
    <location>
        <begin position="252"/>
        <end position="254"/>
    </location>
</feature>
<feature type="helix" evidence="38">
    <location>
        <begin position="257"/>
        <end position="259"/>
    </location>
</feature>
<feature type="strand" evidence="39">
    <location>
        <begin position="260"/>
        <end position="268"/>
    </location>
</feature>
<feature type="strand" evidence="39">
    <location>
        <begin position="272"/>
        <end position="274"/>
    </location>
</feature>
<feature type="strand" evidence="39">
    <location>
        <begin position="277"/>
        <end position="288"/>
    </location>
</feature>
<feature type="helix" evidence="39">
    <location>
        <begin position="293"/>
        <end position="305"/>
    </location>
</feature>
<feature type="helix" evidence="39">
    <location>
        <begin position="313"/>
        <end position="317"/>
    </location>
</feature>
<feature type="strand" evidence="39">
    <location>
        <begin position="319"/>
        <end position="321"/>
    </location>
</feature>
<feature type="strand" evidence="39">
    <location>
        <begin position="333"/>
        <end position="338"/>
    </location>
</feature>
<feature type="helix" evidence="38">
    <location>
        <begin position="341"/>
        <end position="344"/>
    </location>
</feature>
<feature type="helix" evidence="39">
    <location>
        <begin position="359"/>
        <end position="361"/>
    </location>
</feature>
<feature type="helix" evidence="39">
    <location>
        <begin position="362"/>
        <end position="371"/>
    </location>
</feature>
<feature type="helix" evidence="39">
    <location>
        <begin position="373"/>
        <end position="384"/>
    </location>
</feature>
<feature type="helix" evidence="39">
    <location>
        <begin position="386"/>
        <end position="391"/>
    </location>
</feature>
<feature type="helix" evidence="39">
    <location>
        <begin position="392"/>
        <end position="396"/>
    </location>
</feature>
<feature type="helix" evidence="38">
    <location>
        <begin position="401"/>
        <end position="404"/>
    </location>
</feature>
<comment type="function">
    <text evidence="5 12 16 18">Pseudouridylate synthase that catalyzes pseudouridylation of tRNAs and mRNAs (PubMed:15772074, PubMed:24722331). Acts on positions 27/28 in the anticodon stem and also positions 34 and 36 in the anticodon of an intron containing tRNA (PubMed:24722331). Also catalyzes pseudouridylation of mRNAs: mediates pseudouridylation of mRNAs with the consensus sequence 5'-UGUAG-3' (PubMed:31477916, PubMed:35051350). Acts as a regulator of pre-mRNA splicing by mediating pseudouridylation of pre-mRNAs at locations associated with alternatively spliced regions (PubMed:35051350). Pseudouridylation of pre-mRNAs near splice sites directly regulates mRNA splicing and mRNA 3'-end processing (PubMed:35051350). Involved in regulation of nuclear receptor activity through pseudouridylation of SRA1 mRNA (PubMed:24722331).</text>
</comment>
<comment type="catalytic activity">
    <reaction evidence="25">
        <text>a uridine in tRNA = a pseudouridine in tRNA</text>
        <dbReference type="Rhea" id="RHEA:54572"/>
        <dbReference type="Rhea" id="RHEA-COMP:13339"/>
        <dbReference type="Rhea" id="RHEA-COMP:13934"/>
        <dbReference type="ChEBI" id="CHEBI:65314"/>
        <dbReference type="ChEBI" id="CHEBI:65315"/>
    </reaction>
</comment>
<comment type="catalytic activity">
    <reaction evidence="25">
        <text>uridine(38/39/40) in tRNA = pseudouridine(38/39/40) in tRNA</text>
        <dbReference type="Rhea" id="RHEA:22376"/>
        <dbReference type="Rhea" id="RHEA-COMP:10085"/>
        <dbReference type="Rhea" id="RHEA-COMP:10087"/>
        <dbReference type="ChEBI" id="CHEBI:65314"/>
        <dbReference type="ChEBI" id="CHEBI:65315"/>
        <dbReference type="EC" id="5.4.99.12"/>
    </reaction>
</comment>
<comment type="catalytic activity">
    <reaction evidence="18">
        <text>a uridine in mRNA = a pseudouridine in mRNA</text>
        <dbReference type="Rhea" id="RHEA:56644"/>
        <dbReference type="Rhea" id="RHEA-COMP:14658"/>
        <dbReference type="Rhea" id="RHEA-COMP:14659"/>
        <dbReference type="ChEBI" id="CHEBI:65314"/>
        <dbReference type="ChEBI" id="CHEBI:65315"/>
    </reaction>
</comment>
<comment type="subunit">
    <text evidence="1 11 12">Monomer (PubMed:23707380, PubMed:24722331). Forms a complex with RARG and the SRA1 RNA in the nucleus (By similarity).</text>
</comment>
<comment type="subcellular location">
    <molecule>Isoform 1</molecule>
    <subcellularLocation>
        <location evidence="8 24">Mitochondrion</location>
    </subcellularLocation>
</comment>
<comment type="subcellular location">
    <molecule>Isoform 2</molecule>
    <subcellularLocation>
        <location evidence="8 24">Nucleus</location>
    </subcellularLocation>
    <subcellularLocation>
        <location evidence="24">Cytoplasm</location>
    </subcellularLocation>
</comment>
<comment type="alternative products">
    <event type="alternative splicing"/>
    <isoform>
        <id>Q9Y606-1</id>
        <name>1</name>
        <sequence type="displayed"/>
    </isoform>
    <isoform>
        <id>Q9Y606-2</id>
        <name>2</name>
        <sequence type="described" ref="VSP_020116"/>
    </isoform>
</comment>
<comment type="tissue specificity">
    <text evidence="4">Widely expressed (PubMed:15108122). High levels of expression found in brain and skeletal muscle (PubMed:15108122).</text>
</comment>
<comment type="disease" evidence="4 5 6 7 8 9 10 13 14 15 17">
    <disease id="DI-02020">
        <name>Myopathy with lactic acidosis and sideroblastic anemia 1</name>
        <acronym>MLASA1</acronym>
        <description>A rare oxidative phosphorylation disorder specific to skeletal muscle and bone marrow. Affected individuals manifest progressive muscle weakness, exercise intolerance, lactic acidosis, sideroblastic anemia and delayed growth.</description>
        <dbReference type="MIM" id="600462"/>
    </disease>
    <text>The disease is caused by variants affecting the gene represented in this entry.</text>
</comment>
<comment type="similarity">
    <text evidence="23">Belongs to the tRNA pseudouridine synthase TruA family.</text>
</comment>
<evidence type="ECO:0000250" key="1">
    <source>
        <dbReference type="UniProtKB" id="Q9WU56"/>
    </source>
</evidence>
<evidence type="ECO:0000255" key="2"/>
<evidence type="ECO:0000256" key="3">
    <source>
        <dbReference type="SAM" id="MobiDB-lite"/>
    </source>
</evidence>
<evidence type="ECO:0000269" key="4">
    <source>
    </source>
</evidence>
<evidence type="ECO:0000269" key="5">
    <source>
    </source>
</evidence>
<evidence type="ECO:0000269" key="6">
    <source>
    </source>
</evidence>
<evidence type="ECO:0000269" key="7">
    <source>
    </source>
</evidence>
<evidence type="ECO:0000269" key="8">
    <source>
    </source>
</evidence>
<evidence type="ECO:0000269" key="9">
    <source>
    </source>
</evidence>
<evidence type="ECO:0000269" key="10">
    <source>
    </source>
</evidence>
<evidence type="ECO:0000269" key="11">
    <source>
    </source>
</evidence>
<evidence type="ECO:0000269" key="12">
    <source>
    </source>
</evidence>
<evidence type="ECO:0000269" key="13">
    <source>
    </source>
</evidence>
<evidence type="ECO:0000269" key="14">
    <source>
    </source>
</evidence>
<evidence type="ECO:0000269" key="15">
    <source>
    </source>
</evidence>
<evidence type="ECO:0000269" key="16">
    <source>
    </source>
</evidence>
<evidence type="ECO:0000269" key="17">
    <source>
    </source>
</evidence>
<evidence type="ECO:0000269" key="18">
    <source>
    </source>
</evidence>
<evidence type="ECO:0000303" key="19">
    <source>
    </source>
</evidence>
<evidence type="ECO:0000303" key="20">
    <source>
    </source>
</evidence>
<evidence type="ECO:0000303" key="21">
    <source>
    </source>
</evidence>
<evidence type="ECO:0000303" key="22">
    <source>
    </source>
</evidence>
<evidence type="ECO:0000305" key="23"/>
<evidence type="ECO:0000305" key="24">
    <source>
    </source>
</evidence>
<evidence type="ECO:0000305" key="25">
    <source>
    </source>
</evidence>
<evidence type="ECO:0000312" key="26">
    <source>
        <dbReference type="HGNC" id="HGNC:15508"/>
    </source>
</evidence>
<evidence type="ECO:0007744" key="27">
    <source>
        <dbReference type="PDB" id="4IQM"/>
    </source>
</evidence>
<evidence type="ECO:0007744" key="28">
    <source>
        <dbReference type="PDB" id="4ITS"/>
    </source>
</evidence>
<evidence type="ECO:0007744" key="29">
    <source>
        <dbReference type="PDB" id="4J37"/>
    </source>
</evidence>
<evidence type="ECO:0007744" key="30">
    <source>
        <dbReference type="PDB" id="4NZ6"/>
    </source>
</evidence>
<evidence type="ECO:0007744" key="31">
    <source>
        <dbReference type="PDB" id="4NZ7"/>
    </source>
</evidence>
<evidence type="ECO:0007744" key="32">
    <source>
    </source>
</evidence>
<evidence type="ECO:0007744" key="33">
    <source>
    </source>
</evidence>
<evidence type="ECO:0007744" key="34">
    <source>
    </source>
</evidence>
<evidence type="ECO:0007744" key="35">
    <source>
    </source>
</evidence>
<evidence type="ECO:0007744" key="36">
    <source>
    </source>
</evidence>
<evidence type="ECO:0007744" key="37">
    <source>
    </source>
</evidence>
<evidence type="ECO:0007829" key="38">
    <source>
        <dbReference type="PDB" id="4IQM"/>
    </source>
</evidence>
<evidence type="ECO:0007829" key="39">
    <source>
        <dbReference type="PDB" id="4J37"/>
    </source>
</evidence>